<gene>
    <name evidence="2" type="primary">mhpC</name>
    <name type="ordered locus">EcE24377A_0373</name>
</gene>
<reference key="1">
    <citation type="journal article" date="2008" name="J. Bacteriol.">
        <title>The pangenome structure of Escherichia coli: comparative genomic analysis of E. coli commensal and pathogenic isolates.</title>
        <authorList>
            <person name="Rasko D.A."/>
            <person name="Rosovitz M.J."/>
            <person name="Myers G.S.A."/>
            <person name="Mongodin E.F."/>
            <person name="Fricke W.F."/>
            <person name="Gajer P."/>
            <person name="Crabtree J."/>
            <person name="Sebaihia M."/>
            <person name="Thomson N.R."/>
            <person name="Chaudhuri R."/>
            <person name="Henderson I.R."/>
            <person name="Sperandio V."/>
            <person name="Ravel J."/>
        </authorList>
    </citation>
    <scope>NUCLEOTIDE SEQUENCE [LARGE SCALE GENOMIC DNA]</scope>
    <source>
        <strain>E24377A / ETEC</strain>
    </source>
</reference>
<accession>A7ZI96</accession>
<feature type="chain" id="PRO_0000337780" description="2-hydroxy-6-oxononadienedioate/2-hydroxy-6-oxononatrienedioate hydrolase">
    <location>
        <begin position="1"/>
        <end position="288"/>
    </location>
</feature>
<feature type="domain" description="AB hydrolase-1" evidence="1">
    <location>
        <begin position="38"/>
        <end position="273"/>
    </location>
</feature>
<feature type="active site" description="Proton acceptor" evidence="2">
    <location>
        <position position="267"/>
    </location>
</feature>
<feature type="site" description="Transition state stabilizer" evidence="2">
    <location>
        <position position="114"/>
    </location>
</feature>
<feature type="site" description="Catalytic role in ketonization of the dienol substrate (substrate destabilization)" evidence="2">
    <location>
        <position position="192"/>
    </location>
</feature>
<keyword id="KW-0058">Aromatic hydrocarbons catabolism</keyword>
<keyword id="KW-0378">Hydrolase</keyword>
<keyword id="KW-1185">Reference proteome</keyword>
<protein>
    <recommendedName>
        <fullName evidence="2">2-hydroxy-6-oxononadienedioate/2-hydroxy-6-oxononatrienedioate hydrolase</fullName>
        <ecNumber evidence="2">3.7.1.14</ecNumber>
    </recommendedName>
    <alternativeName>
        <fullName evidence="2">2-hydroxy-6-ketonona-2,4-diene-1,9-dioic acid 5,6-hydrolase</fullName>
    </alternativeName>
    <alternativeName>
        <fullName evidence="2">2-hydroxy-6-oxonona-2,4,7-triene-1,9-dioic acid 5,6-hydrolase</fullName>
    </alternativeName>
    <alternativeName>
        <fullName evidence="2">2-hydroxy-6-oxonona-2,4-diene-1,9-dioic acid 5,6-hydrolase</fullName>
    </alternativeName>
</protein>
<organism>
    <name type="scientific">Escherichia coli O139:H28 (strain E24377A / ETEC)</name>
    <dbReference type="NCBI Taxonomy" id="331111"/>
    <lineage>
        <taxon>Bacteria</taxon>
        <taxon>Pseudomonadati</taxon>
        <taxon>Pseudomonadota</taxon>
        <taxon>Gammaproteobacteria</taxon>
        <taxon>Enterobacterales</taxon>
        <taxon>Enterobacteriaceae</taxon>
        <taxon>Escherichia</taxon>
    </lineage>
</organism>
<dbReference type="EC" id="3.7.1.14" evidence="2"/>
<dbReference type="EMBL" id="CP000800">
    <property type="protein sequence ID" value="ABV17339.1"/>
    <property type="status" value="ALT_INIT"/>
    <property type="molecule type" value="Genomic_DNA"/>
</dbReference>
<dbReference type="RefSeq" id="WP_000121898.1">
    <property type="nucleotide sequence ID" value="NC_009801.1"/>
</dbReference>
<dbReference type="SMR" id="A7ZI96"/>
<dbReference type="ESTHER" id="ecoli-mhpc">
    <property type="family name" value="Carbon-carbon_bond_hydrolase"/>
</dbReference>
<dbReference type="MEROPS" id="S33.995"/>
<dbReference type="GeneID" id="93777106"/>
<dbReference type="KEGG" id="ecw:EcE24377A_0373"/>
<dbReference type="HOGENOM" id="CLU_020336_13_2_6"/>
<dbReference type="UniPathway" id="UPA00714"/>
<dbReference type="Proteomes" id="UP000001122">
    <property type="component" value="Chromosome"/>
</dbReference>
<dbReference type="GO" id="GO:0005737">
    <property type="term" value="C:cytoplasm"/>
    <property type="evidence" value="ECO:0007669"/>
    <property type="project" value="InterPro"/>
</dbReference>
<dbReference type="GO" id="GO:0052823">
    <property type="term" value="F:2-hydroxy-6-oxonona-2,4,7-trienedioate hydrolase activity"/>
    <property type="evidence" value="ECO:0007669"/>
    <property type="project" value="RHEA"/>
</dbReference>
<dbReference type="GO" id="GO:0018771">
    <property type="term" value="F:2-hydroxy-6-oxonona-2,4-dienedioate hydrolase activity"/>
    <property type="evidence" value="ECO:0007669"/>
    <property type="project" value="UniProtKB-UniRule"/>
</dbReference>
<dbReference type="GO" id="GO:0042803">
    <property type="term" value="F:protein homodimerization activity"/>
    <property type="evidence" value="ECO:0007669"/>
    <property type="project" value="InterPro"/>
</dbReference>
<dbReference type="GO" id="GO:0019380">
    <property type="term" value="P:3-phenylpropionate catabolic process"/>
    <property type="evidence" value="ECO:0007669"/>
    <property type="project" value="UniProtKB-UniRule"/>
</dbReference>
<dbReference type="FunFam" id="3.40.50.1820:FF:000085">
    <property type="entry name" value="2-hydroxy-6-oxononadienedioate/2-hydroxy-6-oxononatrienedioate hydrolase"/>
    <property type="match status" value="1"/>
</dbReference>
<dbReference type="Gene3D" id="3.40.50.1820">
    <property type="entry name" value="alpha/beta hydrolase"/>
    <property type="match status" value="1"/>
</dbReference>
<dbReference type="HAMAP" id="MF_01654">
    <property type="entry name" value="MhpC"/>
    <property type="match status" value="1"/>
</dbReference>
<dbReference type="InterPro" id="IPR000073">
    <property type="entry name" value="AB_hydrolase_1"/>
</dbReference>
<dbReference type="InterPro" id="IPR029058">
    <property type="entry name" value="AB_hydrolase_fold"/>
</dbReference>
<dbReference type="InterPro" id="IPR000639">
    <property type="entry name" value="Epox_hydrolase-like"/>
</dbReference>
<dbReference type="InterPro" id="IPR023791">
    <property type="entry name" value="MhpC_alpha/beta_hydrolase"/>
</dbReference>
<dbReference type="PANTHER" id="PTHR43689:SF8">
    <property type="entry name" value="ALPHA_BETA-HYDROLASES SUPERFAMILY PROTEIN"/>
    <property type="match status" value="1"/>
</dbReference>
<dbReference type="PANTHER" id="PTHR43689">
    <property type="entry name" value="HYDROLASE"/>
    <property type="match status" value="1"/>
</dbReference>
<dbReference type="Pfam" id="PF00561">
    <property type="entry name" value="Abhydrolase_1"/>
    <property type="match status" value="1"/>
</dbReference>
<dbReference type="PRINTS" id="PR00111">
    <property type="entry name" value="ABHYDROLASE"/>
</dbReference>
<dbReference type="PRINTS" id="PR00412">
    <property type="entry name" value="EPOXHYDRLASE"/>
</dbReference>
<dbReference type="SUPFAM" id="SSF53474">
    <property type="entry name" value="alpha/beta-Hydrolases"/>
    <property type="match status" value="1"/>
</dbReference>
<proteinExistence type="inferred from homology"/>
<comment type="function">
    <text evidence="2">Catalyzes the cleavage of the C5-C6 bond of 2-hydroxy-6-oxononadienedioate and 2-hydroxy-6-oxononatrienedioate, a dienol ring fission product of the bacterial meta-cleavage pathway for degradation of phenylpropionic acid.</text>
</comment>
<comment type="catalytic activity">
    <reaction evidence="2">
        <text>(2Z,4E)-2-hydroxy-6-oxonona-2,4-dienedioate + H2O = (2Z)-2-hydroxypenta-2,4-dienoate + succinate + H(+)</text>
        <dbReference type="Rhea" id="RHEA:34187"/>
        <dbReference type="ChEBI" id="CHEBI:15377"/>
        <dbReference type="ChEBI" id="CHEBI:15378"/>
        <dbReference type="ChEBI" id="CHEBI:30031"/>
        <dbReference type="ChEBI" id="CHEBI:66887"/>
        <dbReference type="ChEBI" id="CHEBI:67152"/>
        <dbReference type="EC" id="3.7.1.14"/>
    </reaction>
</comment>
<comment type="catalytic activity">
    <reaction evidence="2">
        <text>(2Z,4E,7E)-2-hydroxy-6-oxonona-2,4,7-trienedioate + H2O = (2Z)-2-hydroxypenta-2,4-dienoate + fumarate + H(+)</text>
        <dbReference type="Rhea" id="RHEA:34191"/>
        <dbReference type="ChEBI" id="CHEBI:15377"/>
        <dbReference type="ChEBI" id="CHEBI:15378"/>
        <dbReference type="ChEBI" id="CHEBI:29806"/>
        <dbReference type="ChEBI" id="CHEBI:66888"/>
        <dbReference type="ChEBI" id="CHEBI:67152"/>
        <dbReference type="EC" id="3.7.1.14"/>
    </reaction>
</comment>
<comment type="pathway">
    <text evidence="2">Aromatic compound metabolism; 3-phenylpropanoate degradation.</text>
</comment>
<comment type="subunit">
    <text evidence="2">Homodimer.</text>
</comment>
<comment type="similarity">
    <text evidence="2">Belongs to the AB hydrolase superfamily. MhpC family.</text>
</comment>
<comment type="sequence caution" evidence="3">
    <conflict type="erroneous initiation">
        <sequence resource="EMBL-CDS" id="ABV17339"/>
    </conflict>
    <text>Extended N-terminus.</text>
</comment>
<evidence type="ECO:0000255" key="1"/>
<evidence type="ECO:0000255" key="2">
    <source>
        <dbReference type="HAMAP-Rule" id="MF_01654"/>
    </source>
</evidence>
<evidence type="ECO:0000305" key="3"/>
<sequence length="288" mass="31937">MSYQPQTEAATSRFLNVEEAGKTLRIHFNDCGQGDETVVLLHGSGPGATGWANFSRNIDPLVEAGYRVILLDCPGWGKSDSIVNSGSRSDLNARILKSVVDQLDIAKIHLLGNSMGGHSSVAFTLNWPERVGKLVLMGGGTGGMSLFTPMPTEGIKRLNQLYRQPTIENLKLMMDIFVFDTSDLTDALFEARLNNMLSRRDHLENFVKSLEANPKQFPDFGPRLAEIKAQTLIVWGRNDRFVPMDAGLRLLSGIAGSELHIFRDCGHWAQWEHADAFNQLVLNFLARP</sequence>
<name>MHPC_ECO24</name>